<sequence length="101" mass="10759">MAAKLKKGDRVVVLAGKDKGKQGEITAVMPKDNKAVVEGVNVAIRHTKQTPTAQGGRLAKAMPIDLSNLALLDANGKATRVGFRFEGEKKVRYAKTTGDVI</sequence>
<evidence type="ECO:0000255" key="1">
    <source>
        <dbReference type="HAMAP-Rule" id="MF_01326"/>
    </source>
</evidence>
<evidence type="ECO:0000305" key="2"/>
<comment type="function">
    <text evidence="1">One of two assembly initiator proteins, it binds directly to the 5'-end of the 23S rRNA, where it nucleates assembly of the 50S subunit.</text>
</comment>
<comment type="function">
    <text evidence="1">One of the proteins that surrounds the polypeptide exit tunnel on the outside of the subunit.</text>
</comment>
<comment type="subunit">
    <text evidence="1">Part of the 50S ribosomal subunit.</text>
</comment>
<comment type="similarity">
    <text evidence="1">Belongs to the universal ribosomal protein uL24 family.</text>
</comment>
<dbReference type="EMBL" id="CP000577">
    <property type="protein sequence ID" value="ABN75488.1"/>
    <property type="molecule type" value="Genomic_DNA"/>
</dbReference>
<dbReference type="RefSeq" id="WP_002722510.1">
    <property type="nucleotide sequence ID" value="NC_009049.1"/>
</dbReference>
<dbReference type="SMR" id="A3PGM2"/>
<dbReference type="GeneID" id="67445511"/>
<dbReference type="KEGG" id="rsh:Rsph17029_0372"/>
<dbReference type="HOGENOM" id="CLU_093315_2_2_5"/>
<dbReference type="GO" id="GO:1990904">
    <property type="term" value="C:ribonucleoprotein complex"/>
    <property type="evidence" value="ECO:0007669"/>
    <property type="project" value="UniProtKB-KW"/>
</dbReference>
<dbReference type="GO" id="GO:0005840">
    <property type="term" value="C:ribosome"/>
    <property type="evidence" value="ECO:0007669"/>
    <property type="project" value="UniProtKB-KW"/>
</dbReference>
<dbReference type="GO" id="GO:0019843">
    <property type="term" value="F:rRNA binding"/>
    <property type="evidence" value="ECO:0007669"/>
    <property type="project" value="UniProtKB-UniRule"/>
</dbReference>
<dbReference type="GO" id="GO:0003735">
    <property type="term" value="F:structural constituent of ribosome"/>
    <property type="evidence" value="ECO:0007669"/>
    <property type="project" value="InterPro"/>
</dbReference>
<dbReference type="GO" id="GO:0006412">
    <property type="term" value="P:translation"/>
    <property type="evidence" value="ECO:0007669"/>
    <property type="project" value="UniProtKB-UniRule"/>
</dbReference>
<dbReference type="CDD" id="cd06089">
    <property type="entry name" value="KOW_RPL26"/>
    <property type="match status" value="1"/>
</dbReference>
<dbReference type="Gene3D" id="2.30.30.30">
    <property type="match status" value="1"/>
</dbReference>
<dbReference type="HAMAP" id="MF_01326_B">
    <property type="entry name" value="Ribosomal_uL24_B"/>
    <property type="match status" value="1"/>
</dbReference>
<dbReference type="InterPro" id="IPR005824">
    <property type="entry name" value="KOW"/>
</dbReference>
<dbReference type="InterPro" id="IPR014722">
    <property type="entry name" value="Rib_uL2_dom2"/>
</dbReference>
<dbReference type="InterPro" id="IPR003256">
    <property type="entry name" value="Ribosomal_uL24"/>
</dbReference>
<dbReference type="InterPro" id="IPR005825">
    <property type="entry name" value="Ribosomal_uL24_CS"/>
</dbReference>
<dbReference type="InterPro" id="IPR041988">
    <property type="entry name" value="Ribosomal_uL24_KOW"/>
</dbReference>
<dbReference type="InterPro" id="IPR008991">
    <property type="entry name" value="Translation_prot_SH3-like_sf"/>
</dbReference>
<dbReference type="NCBIfam" id="TIGR01079">
    <property type="entry name" value="rplX_bact"/>
    <property type="match status" value="1"/>
</dbReference>
<dbReference type="PANTHER" id="PTHR12903">
    <property type="entry name" value="MITOCHONDRIAL RIBOSOMAL PROTEIN L24"/>
    <property type="match status" value="1"/>
</dbReference>
<dbReference type="Pfam" id="PF00467">
    <property type="entry name" value="KOW"/>
    <property type="match status" value="1"/>
</dbReference>
<dbReference type="Pfam" id="PF17136">
    <property type="entry name" value="ribosomal_L24"/>
    <property type="match status" value="1"/>
</dbReference>
<dbReference type="SMART" id="SM00739">
    <property type="entry name" value="KOW"/>
    <property type="match status" value="1"/>
</dbReference>
<dbReference type="SUPFAM" id="SSF50104">
    <property type="entry name" value="Translation proteins SH3-like domain"/>
    <property type="match status" value="1"/>
</dbReference>
<dbReference type="PROSITE" id="PS01108">
    <property type="entry name" value="RIBOSOMAL_L24"/>
    <property type="match status" value="1"/>
</dbReference>
<name>RL24_CERS1</name>
<feature type="chain" id="PRO_1000052292" description="Large ribosomal subunit protein uL24">
    <location>
        <begin position="1"/>
        <end position="101"/>
    </location>
</feature>
<organism>
    <name type="scientific">Cereibacter sphaeroides (strain ATCC 17029 / ATH 2.4.9)</name>
    <name type="common">Rhodobacter sphaeroides</name>
    <dbReference type="NCBI Taxonomy" id="349101"/>
    <lineage>
        <taxon>Bacteria</taxon>
        <taxon>Pseudomonadati</taxon>
        <taxon>Pseudomonadota</taxon>
        <taxon>Alphaproteobacteria</taxon>
        <taxon>Rhodobacterales</taxon>
        <taxon>Paracoccaceae</taxon>
        <taxon>Cereibacter</taxon>
    </lineage>
</organism>
<proteinExistence type="inferred from homology"/>
<protein>
    <recommendedName>
        <fullName evidence="1">Large ribosomal subunit protein uL24</fullName>
    </recommendedName>
    <alternativeName>
        <fullName evidence="2">50S ribosomal protein L24</fullName>
    </alternativeName>
</protein>
<keyword id="KW-0687">Ribonucleoprotein</keyword>
<keyword id="KW-0689">Ribosomal protein</keyword>
<keyword id="KW-0694">RNA-binding</keyword>
<keyword id="KW-0699">rRNA-binding</keyword>
<accession>A3PGM2</accession>
<gene>
    <name evidence="1" type="primary">rplX</name>
    <name type="ordered locus">Rsph17029_0372</name>
</gene>
<reference key="1">
    <citation type="submission" date="2007-02" db="EMBL/GenBank/DDBJ databases">
        <title>Complete sequence of chromosome 1 of Rhodobacter sphaeroides ATCC 17029.</title>
        <authorList>
            <person name="Copeland A."/>
            <person name="Lucas S."/>
            <person name="Lapidus A."/>
            <person name="Barry K."/>
            <person name="Detter J.C."/>
            <person name="Glavina del Rio T."/>
            <person name="Hammon N."/>
            <person name="Israni S."/>
            <person name="Dalin E."/>
            <person name="Tice H."/>
            <person name="Pitluck S."/>
            <person name="Kiss H."/>
            <person name="Brettin T."/>
            <person name="Bruce D."/>
            <person name="Han C."/>
            <person name="Tapia R."/>
            <person name="Gilna P."/>
            <person name="Schmutz J."/>
            <person name="Larimer F."/>
            <person name="Land M."/>
            <person name="Hauser L."/>
            <person name="Kyrpides N."/>
            <person name="Mikhailova N."/>
            <person name="Richardson P."/>
            <person name="Mackenzie C."/>
            <person name="Choudhary M."/>
            <person name="Donohue T.J."/>
            <person name="Kaplan S."/>
        </authorList>
    </citation>
    <scope>NUCLEOTIDE SEQUENCE [LARGE SCALE GENOMIC DNA]</scope>
    <source>
        <strain>ATCC 17029 / ATH 2.4.9</strain>
    </source>
</reference>